<gene>
    <name evidence="1" type="primary">grpE</name>
    <name type="ordered locus">Smlt1991</name>
</gene>
<accession>B2FMY4</accession>
<comment type="function">
    <text evidence="1">Participates actively in the response to hyperosmotic and heat shock by preventing the aggregation of stress-denatured proteins, in association with DnaK and GrpE. It is the nucleotide exchange factor for DnaK and may function as a thermosensor. Unfolded proteins bind initially to DnaJ; upon interaction with the DnaJ-bound protein, DnaK hydrolyzes its bound ATP, resulting in the formation of a stable complex. GrpE releases ADP from DnaK; ATP binding to DnaK triggers the release of the substrate protein, thus completing the reaction cycle. Several rounds of ATP-dependent interactions between DnaJ, DnaK and GrpE are required for fully efficient folding.</text>
</comment>
<comment type="subunit">
    <text evidence="1">Homodimer.</text>
</comment>
<comment type="subcellular location">
    <subcellularLocation>
        <location evidence="1">Cytoplasm</location>
    </subcellularLocation>
</comment>
<comment type="similarity">
    <text evidence="1">Belongs to the GrpE family.</text>
</comment>
<organism>
    <name type="scientific">Stenotrophomonas maltophilia (strain K279a)</name>
    <dbReference type="NCBI Taxonomy" id="522373"/>
    <lineage>
        <taxon>Bacteria</taxon>
        <taxon>Pseudomonadati</taxon>
        <taxon>Pseudomonadota</taxon>
        <taxon>Gammaproteobacteria</taxon>
        <taxon>Lysobacterales</taxon>
        <taxon>Lysobacteraceae</taxon>
        <taxon>Stenotrophomonas</taxon>
        <taxon>Stenotrophomonas maltophilia group</taxon>
    </lineage>
</organism>
<feature type="chain" id="PRO_1000137632" description="Protein GrpE">
    <location>
        <begin position="1"/>
        <end position="171"/>
    </location>
</feature>
<feature type="region of interest" description="Disordered" evidence="2">
    <location>
        <begin position="1"/>
        <end position="22"/>
    </location>
</feature>
<sequence length="171" mass="18611">MNHEQPDIESQQSAADAAATAGVNDEVERLRAEIEQVKADALRERADLENQRKRVARDIEQARKFANEKLLGDLLPVFDSLDAGLKAAGDDPHPLREGLELTYKQLLKVAADNGLVLLDPIGQPFNPEHHQAISQVPTPGAAPGSVVTVFQKGYLLNERLLRPALVVVAAD</sequence>
<keyword id="KW-0143">Chaperone</keyword>
<keyword id="KW-0963">Cytoplasm</keyword>
<keyword id="KW-1185">Reference proteome</keyword>
<keyword id="KW-0346">Stress response</keyword>
<proteinExistence type="inferred from homology"/>
<protein>
    <recommendedName>
        <fullName evidence="1">Protein GrpE</fullName>
    </recommendedName>
    <alternativeName>
        <fullName evidence="1">HSP-70 cofactor</fullName>
    </alternativeName>
</protein>
<dbReference type="EMBL" id="AM743169">
    <property type="protein sequence ID" value="CAQ45505.1"/>
    <property type="molecule type" value="Genomic_DNA"/>
</dbReference>
<dbReference type="RefSeq" id="WP_005409240.1">
    <property type="nucleotide sequence ID" value="NC_010943.1"/>
</dbReference>
<dbReference type="SMR" id="B2FMY4"/>
<dbReference type="EnsemblBacteria" id="CAQ45505">
    <property type="protein sequence ID" value="CAQ45505"/>
    <property type="gene ID" value="Smlt1991"/>
</dbReference>
<dbReference type="GeneID" id="93833116"/>
<dbReference type="KEGG" id="sml:Smlt1991"/>
<dbReference type="eggNOG" id="COG0576">
    <property type="taxonomic scope" value="Bacteria"/>
</dbReference>
<dbReference type="HOGENOM" id="CLU_057217_6_0_6"/>
<dbReference type="Proteomes" id="UP000008840">
    <property type="component" value="Chromosome"/>
</dbReference>
<dbReference type="GO" id="GO:0005829">
    <property type="term" value="C:cytosol"/>
    <property type="evidence" value="ECO:0007669"/>
    <property type="project" value="TreeGrafter"/>
</dbReference>
<dbReference type="GO" id="GO:0000774">
    <property type="term" value="F:adenyl-nucleotide exchange factor activity"/>
    <property type="evidence" value="ECO:0007669"/>
    <property type="project" value="InterPro"/>
</dbReference>
<dbReference type="GO" id="GO:0042803">
    <property type="term" value="F:protein homodimerization activity"/>
    <property type="evidence" value="ECO:0007669"/>
    <property type="project" value="InterPro"/>
</dbReference>
<dbReference type="GO" id="GO:0051087">
    <property type="term" value="F:protein-folding chaperone binding"/>
    <property type="evidence" value="ECO:0007669"/>
    <property type="project" value="InterPro"/>
</dbReference>
<dbReference type="GO" id="GO:0051082">
    <property type="term" value="F:unfolded protein binding"/>
    <property type="evidence" value="ECO:0007669"/>
    <property type="project" value="TreeGrafter"/>
</dbReference>
<dbReference type="GO" id="GO:0006457">
    <property type="term" value="P:protein folding"/>
    <property type="evidence" value="ECO:0007669"/>
    <property type="project" value="InterPro"/>
</dbReference>
<dbReference type="CDD" id="cd00446">
    <property type="entry name" value="GrpE"/>
    <property type="match status" value="1"/>
</dbReference>
<dbReference type="FunFam" id="2.30.22.10:FF:000001">
    <property type="entry name" value="Protein GrpE"/>
    <property type="match status" value="1"/>
</dbReference>
<dbReference type="Gene3D" id="3.90.20.20">
    <property type="match status" value="1"/>
</dbReference>
<dbReference type="Gene3D" id="2.30.22.10">
    <property type="entry name" value="Head domain of nucleotide exchange factor GrpE"/>
    <property type="match status" value="1"/>
</dbReference>
<dbReference type="HAMAP" id="MF_01151">
    <property type="entry name" value="GrpE"/>
    <property type="match status" value="1"/>
</dbReference>
<dbReference type="InterPro" id="IPR000740">
    <property type="entry name" value="GrpE"/>
</dbReference>
<dbReference type="InterPro" id="IPR013805">
    <property type="entry name" value="GrpE_coiled_coil"/>
</dbReference>
<dbReference type="InterPro" id="IPR009012">
    <property type="entry name" value="GrpE_head"/>
</dbReference>
<dbReference type="NCBIfam" id="NF010745">
    <property type="entry name" value="PRK14147.1"/>
    <property type="match status" value="1"/>
</dbReference>
<dbReference type="PANTHER" id="PTHR21237">
    <property type="entry name" value="GRPE PROTEIN"/>
    <property type="match status" value="1"/>
</dbReference>
<dbReference type="PANTHER" id="PTHR21237:SF23">
    <property type="entry name" value="GRPE PROTEIN HOMOLOG, MITOCHONDRIAL"/>
    <property type="match status" value="1"/>
</dbReference>
<dbReference type="Pfam" id="PF01025">
    <property type="entry name" value="GrpE"/>
    <property type="match status" value="1"/>
</dbReference>
<dbReference type="PRINTS" id="PR00773">
    <property type="entry name" value="GRPEPROTEIN"/>
</dbReference>
<dbReference type="SUPFAM" id="SSF58014">
    <property type="entry name" value="Coiled-coil domain of nucleotide exchange factor GrpE"/>
    <property type="match status" value="1"/>
</dbReference>
<dbReference type="SUPFAM" id="SSF51064">
    <property type="entry name" value="Head domain of nucleotide exchange factor GrpE"/>
    <property type="match status" value="1"/>
</dbReference>
<dbReference type="PROSITE" id="PS01071">
    <property type="entry name" value="GRPE"/>
    <property type="match status" value="1"/>
</dbReference>
<evidence type="ECO:0000255" key="1">
    <source>
        <dbReference type="HAMAP-Rule" id="MF_01151"/>
    </source>
</evidence>
<evidence type="ECO:0000256" key="2">
    <source>
        <dbReference type="SAM" id="MobiDB-lite"/>
    </source>
</evidence>
<reference key="1">
    <citation type="journal article" date="2008" name="Genome Biol.">
        <title>The complete genome, comparative and functional analysis of Stenotrophomonas maltophilia reveals an organism heavily shielded by drug resistance determinants.</title>
        <authorList>
            <person name="Crossman L.C."/>
            <person name="Gould V.C."/>
            <person name="Dow J.M."/>
            <person name="Vernikos G.S."/>
            <person name="Okazaki A."/>
            <person name="Sebaihia M."/>
            <person name="Saunders D."/>
            <person name="Arrowsmith C."/>
            <person name="Carver T."/>
            <person name="Peters N."/>
            <person name="Adlem E."/>
            <person name="Kerhornou A."/>
            <person name="Lord A."/>
            <person name="Murphy L."/>
            <person name="Seeger K."/>
            <person name="Squares R."/>
            <person name="Rutter S."/>
            <person name="Quail M.A."/>
            <person name="Rajandream M.A."/>
            <person name="Harris D."/>
            <person name="Churcher C."/>
            <person name="Bentley S.D."/>
            <person name="Parkhill J."/>
            <person name="Thomson N.R."/>
            <person name="Avison M.B."/>
        </authorList>
    </citation>
    <scope>NUCLEOTIDE SEQUENCE [LARGE SCALE GENOMIC DNA]</scope>
    <source>
        <strain>K279a</strain>
    </source>
</reference>
<name>GRPE_STRMK</name>